<name>JTX2B_CHIFL</name>
<accession>T1PQV6</accession>
<reference key="1">
    <citation type="journal article" date="2014" name="J. Biol. Chem.">
        <title>Chironex fleckeri (box jellyfish) venom proteins: expansion of a cnidarian toxin family that elicits variable cytolytic and cardiovascular effects.</title>
        <authorList>
            <person name="Brinkman D.L."/>
            <person name="Konstantakopoulos N."/>
            <person name="McInerney B.V."/>
            <person name="Mulvenna J."/>
            <person name="Seymour J.E."/>
            <person name="Isbister G.K."/>
            <person name="Hodgson W.C."/>
        </authorList>
    </citation>
    <scope>NUCLEOTIDE SEQUENCE [MRNA]</scope>
    <scope>PROTEIN SEQUENCE OF 32-46 AND 148-156</scope>
    <scope>SUBCELLULAR LOCATION</scope>
    <scope>FUNCTION</scope>
    <scope>IDENTIFICATION BY MASS SPECTROMETRY</scope>
    <scope>3D-STRUCTURE MODELING</scope>
    <source>
        <tissue>Tentacle</tissue>
    </source>
</reference>
<reference key="2">
    <citation type="journal article" date="2015" name="Toxins">
        <title>Firing the sting: chemically induced discharge of cnidae reveals novel proteins and peptides from box jellyfish (Chironex fleckeri) venom.</title>
        <authorList>
            <person name="Jouiaei M."/>
            <person name="Casewell N.R."/>
            <person name="Yanagihara A.A."/>
            <person name="Nouwens A."/>
            <person name="Cribb B.W."/>
            <person name="Whitehead D."/>
            <person name="Jackson T.N."/>
            <person name="Ali S.A."/>
            <person name="Wagstaff S.C."/>
            <person name="Koludarov I."/>
            <person name="Alewood P."/>
            <person name="Hansen J."/>
            <person name="Fry B.G."/>
        </authorList>
    </citation>
    <scope>IDENTIFICATION IN TRANSCRIPTOME AND PROTEOME</scope>
    <scope>SUBCELLULAR LOCATION</scope>
    <source>
        <tissue>Tentacle</tissue>
    </source>
</reference>
<proteinExistence type="evidence at protein level"/>
<protein>
    <recommendedName>
        <fullName evidence="4">Toxin CfTX-B</fullName>
    </recommendedName>
    <alternativeName>
        <fullName evidence="7">Toxin B</fullName>
        <shortName evidence="7">TX-B</shortName>
    </alternativeName>
</protein>
<evidence type="ECO:0000255" key="1"/>
<evidence type="ECO:0000269" key="2">
    <source>
    </source>
</evidence>
<evidence type="ECO:0000269" key="3">
    <source>
    </source>
</evidence>
<evidence type="ECO:0000303" key="4">
    <source>
    </source>
</evidence>
<evidence type="ECO:0000305" key="5"/>
<evidence type="ECO:0000305" key="6">
    <source>
    </source>
</evidence>
<evidence type="ECO:0000312" key="7">
    <source>
        <dbReference type="EMBL" id="AFQ00677.1"/>
    </source>
</evidence>
<comment type="function">
    <text evidence="2">The fraction containing this toxin and CfTX-B shows potent hemolytic activity (PubMed:24403082). This fraction causes minor effects on the cardiovascular system of anesthetized rats (at 25 ug/kg), since it has no significant effects on heart rate but produces relatively small increases in mean arterial pressure (PubMed:24403082).</text>
</comment>
<comment type="subunit">
    <text evidence="6">Oligomer.</text>
</comment>
<comment type="subcellular location">
    <subcellularLocation>
        <location evidence="2 3">Secreted</location>
    </subcellularLocation>
    <subcellularLocation>
        <location evidence="2 3">Nematocyst</location>
    </subcellularLocation>
    <subcellularLocation>
        <location evidence="6">Target cell membrane</location>
    </subcellularLocation>
    <text evidence="6">Forms a membrane channel in the prey.</text>
</comment>
<comment type="tissue specificity">
    <text evidence="5">Nematocytes.</text>
</comment>
<comment type="PTM">
    <text evidence="5">Contains 2 disulfide bonds.</text>
</comment>
<comment type="miscellaneous">
    <text evidence="2">Negative results: the fraction containing this toxin and CfTX-A does not cross-react with CfTX-1 and CfTX-2 antibodies.</text>
</comment>
<comment type="miscellaneous">
    <text evidence="3">Found after both pressure and chemical disruption of nematocysts.</text>
</comment>
<comment type="similarity">
    <text evidence="6">Belongs to the jellyfish toxin family. Type II subfamily.</text>
</comment>
<feature type="signal peptide" evidence="1">
    <location>
        <begin position="1"/>
        <end position="24"/>
    </location>
</feature>
<feature type="propeptide" id="PRO_0000453746" evidence="6">
    <location>
        <begin position="25"/>
        <end position="31"/>
    </location>
</feature>
<feature type="chain" id="PRO_5004583417" description="Toxin CfTX-B" evidence="6">
    <location>
        <begin position="32"/>
        <end position="461"/>
    </location>
</feature>
<sequence>MDPRISSRLRALALLVFVISITDGIPNRAKRSSSEINAEIDGLIQQLTTVDADTKGIQETLTELKTTVSANPSRISQVSAVVKSVGSSLAKFKTGDPYNIVSGCLDILSSIATTYNGPYGVGLGAVASLLSSVIGLFAQDGFKNSLKSIVDEAFKRYRDEELQGQLKGASRTFNDVIGTLKNLTDKDTAVTDLEFSLATSSVSVSQFSNMLGIIESRINTGSTTTDLAEAKRTVDFIFLYLELAVMRETLLTQLILFTKKLGKFENYANGISASIDANKQAVHDTILFLHQMEPKNAVCGAYYYPVHHSDVSEGIFTFTRYFGLPDPPRNTFQGVYRVENRYWPAWHICKESYMGNHMFRGCSYIKSAGVHISALDNGYLKLNLKGKNMYITKHAQGWAWGTADNDPGEQGYFIFVPLKSGYYMISTKKWPNYFVYMESSASGYIRSWHNNPGLQGHWKLT</sequence>
<dbReference type="EMBL" id="JN695598">
    <property type="protein sequence ID" value="AFQ00677.1"/>
    <property type="molecule type" value="mRNA"/>
</dbReference>
<dbReference type="SMR" id="T1PQV6"/>
<dbReference type="TCDB" id="1.C.112.1.5">
    <property type="family name" value="the cubozoan protein toxin (cpt) family"/>
</dbReference>
<dbReference type="GO" id="GO:0005576">
    <property type="term" value="C:extracellular region"/>
    <property type="evidence" value="ECO:0007669"/>
    <property type="project" value="UniProtKB-SubCell"/>
</dbReference>
<dbReference type="GO" id="GO:0016020">
    <property type="term" value="C:membrane"/>
    <property type="evidence" value="ECO:0007669"/>
    <property type="project" value="UniProtKB-KW"/>
</dbReference>
<dbReference type="GO" id="GO:0042151">
    <property type="term" value="C:nematocyst"/>
    <property type="evidence" value="ECO:0007669"/>
    <property type="project" value="UniProtKB-SubCell"/>
</dbReference>
<dbReference type="GO" id="GO:0044218">
    <property type="term" value="C:other organism cell membrane"/>
    <property type="evidence" value="ECO:0007669"/>
    <property type="project" value="UniProtKB-KW"/>
</dbReference>
<dbReference type="GO" id="GO:0090729">
    <property type="term" value="F:toxin activity"/>
    <property type="evidence" value="ECO:0007669"/>
    <property type="project" value="UniProtKB-KW"/>
</dbReference>
<dbReference type="GO" id="GO:0031640">
    <property type="term" value="P:killing of cells of another organism"/>
    <property type="evidence" value="ECO:0007669"/>
    <property type="project" value="UniProtKB-KW"/>
</dbReference>
<dbReference type="Gene3D" id="1.20.190.10">
    <property type="entry name" value="Pesticidal crystal protein, N-terminal domain"/>
    <property type="match status" value="1"/>
</dbReference>
<dbReference type="InterPro" id="IPR036716">
    <property type="entry name" value="Pest_crys_N_sf"/>
</dbReference>
<dbReference type="SUPFAM" id="SSF56849">
    <property type="entry name" value="delta-Endotoxin (insectocide), N-terminal domain"/>
    <property type="match status" value="1"/>
</dbReference>
<keyword id="KW-0165">Cleavage on pair of basic residues</keyword>
<keyword id="KW-0204">Cytolysis</keyword>
<keyword id="KW-0903">Direct protein sequencing</keyword>
<keyword id="KW-1015">Disulfide bond</keyword>
<keyword id="KW-0354">Hemolysis</keyword>
<keyword id="KW-0472">Membrane</keyword>
<keyword id="KW-0166">Nematocyst</keyword>
<keyword id="KW-0964">Secreted</keyword>
<keyword id="KW-0732">Signal</keyword>
<keyword id="KW-1052">Target cell membrane</keyword>
<keyword id="KW-1053">Target membrane</keyword>
<keyword id="KW-0800">Toxin</keyword>
<organism>
    <name type="scientific">Chironex fleckeri</name>
    <name type="common">Australian box jellyfish</name>
    <dbReference type="NCBI Taxonomy" id="45396"/>
    <lineage>
        <taxon>Eukaryota</taxon>
        <taxon>Metazoa</taxon>
        <taxon>Cnidaria</taxon>
        <taxon>Cubozoa</taxon>
        <taxon>Chirodropida</taxon>
        <taxon>Chirodropidae</taxon>
        <taxon>Chironex</taxon>
    </lineage>
</organism>